<organism>
    <name type="scientific">Cryptococcus neoformans var. neoformans serotype D (strain JEC21 / ATCC MYA-565)</name>
    <name type="common">Filobasidiella neoformans</name>
    <dbReference type="NCBI Taxonomy" id="214684"/>
    <lineage>
        <taxon>Eukaryota</taxon>
        <taxon>Fungi</taxon>
        <taxon>Dikarya</taxon>
        <taxon>Basidiomycota</taxon>
        <taxon>Agaricomycotina</taxon>
        <taxon>Tremellomycetes</taxon>
        <taxon>Tremellales</taxon>
        <taxon>Cryptococcaceae</taxon>
        <taxon>Cryptococcus</taxon>
        <taxon>Cryptococcus neoformans species complex</taxon>
    </lineage>
</organism>
<accession>P0CR28</accession>
<accession>Q55Z22</accession>
<accession>Q5KND8</accession>
<proteinExistence type="inferred from homology"/>
<dbReference type="EC" id="3.6.4.12"/>
<dbReference type="EMBL" id="AE017341">
    <property type="protein sequence ID" value="AAW41095.1"/>
    <property type="molecule type" value="Genomic_DNA"/>
</dbReference>
<dbReference type="RefSeq" id="XP_566914.1">
    <property type="nucleotide sequence ID" value="XM_566914.1"/>
</dbReference>
<dbReference type="SMR" id="P0CR28"/>
<dbReference type="FunCoup" id="P0CR28">
    <property type="interactions" value="638"/>
</dbReference>
<dbReference type="STRING" id="214684.P0CR28"/>
<dbReference type="PaxDb" id="214684-P0CR28"/>
<dbReference type="EnsemblFungi" id="AAW41095">
    <property type="protein sequence ID" value="AAW41095"/>
    <property type="gene ID" value="CNA06840"/>
</dbReference>
<dbReference type="GeneID" id="3253241"/>
<dbReference type="KEGG" id="cne:CNA06840"/>
<dbReference type="VEuPathDB" id="FungiDB:CNA06840"/>
<dbReference type="eggNOG" id="KOG2680">
    <property type="taxonomic scope" value="Eukaryota"/>
</dbReference>
<dbReference type="HOGENOM" id="CLU_028311_4_0_1"/>
<dbReference type="InParanoid" id="P0CR28"/>
<dbReference type="OMA" id="IINTEPY"/>
<dbReference type="OrthoDB" id="10060499at2759"/>
<dbReference type="Proteomes" id="UP000002149">
    <property type="component" value="Chromosome 1"/>
</dbReference>
<dbReference type="GO" id="GO:0031011">
    <property type="term" value="C:Ino80 complex"/>
    <property type="evidence" value="ECO:0000318"/>
    <property type="project" value="GO_Central"/>
</dbReference>
<dbReference type="GO" id="GO:0035267">
    <property type="term" value="C:NuA4 histone acetyltransferase complex"/>
    <property type="evidence" value="ECO:0000318"/>
    <property type="project" value="GO_Central"/>
</dbReference>
<dbReference type="GO" id="GO:0097255">
    <property type="term" value="C:R2TP complex"/>
    <property type="evidence" value="ECO:0000318"/>
    <property type="project" value="GO_Central"/>
</dbReference>
<dbReference type="GO" id="GO:0000812">
    <property type="term" value="C:Swr1 complex"/>
    <property type="evidence" value="ECO:0000318"/>
    <property type="project" value="GO_Central"/>
</dbReference>
<dbReference type="GO" id="GO:0043138">
    <property type="term" value="F:3'-5' DNA helicase activity"/>
    <property type="evidence" value="ECO:0007669"/>
    <property type="project" value="EnsemblFungi"/>
</dbReference>
<dbReference type="GO" id="GO:0043139">
    <property type="term" value="F:5'-3' DNA helicase activity"/>
    <property type="evidence" value="ECO:0007669"/>
    <property type="project" value="EnsemblFungi"/>
</dbReference>
<dbReference type="GO" id="GO:0005524">
    <property type="term" value="F:ATP binding"/>
    <property type="evidence" value="ECO:0007669"/>
    <property type="project" value="UniProtKB-KW"/>
</dbReference>
<dbReference type="GO" id="GO:0016887">
    <property type="term" value="F:ATP hydrolysis activity"/>
    <property type="evidence" value="ECO:0007669"/>
    <property type="project" value="InterPro"/>
</dbReference>
<dbReference type="GO" id="GO:0003678">
    <property type="term" value="F:DNA helicase activity"/>
    <property type="evidence" value="ECO:0000318"/>
    <property type="project" value="GO_Central"/>
</dbReference>
<dbReference type="GO" id="GO:0000492">
    <property type="term" value="P:box C/D snoRNP assembly"/>
    <property type="evidence" value="ECO:0000318"/>
    <property type="project" value="GO_Central"/>
</dbReference>
<dbReference type="GO" id="GO:0006338">
    <property type="term" value="P:chromatin remodeling"/>
    <property type="evidence" value="ECO:0000318"/>
    <property type="project" value="GO_Central"/>
</dbReference>
<dbReference type="GO" id="GO:0006281">
    <property type="term" value="P:DNA repair"/>
    <property type="evidence" value="ECO:0007669"/>
    <property type="project" value="UniProtKB-KW"/>
</dbReference>
<dbReference type="GO" id="GO:0006357">
    <property type="term" value="P:regulation of transcription by RNA polymerase II"/>
    <property type="evidence" value="ECO:0000318"/>
    <property type="project" value="GO_Central"/>
</dbReference>
<dbReference type="GO" id="GO:0006364">
    <property type="term" value="P:rRNA processing"/>
    <property type="evidence" value="ECO:0007669"/>
    <property type="project" value="UniProtKB-KW"/>
</dbReference>
<dbReference type="FunFam" id="3.40.50.300:FF:002221">
    <property type="entry name" value="RuvB-like 2"/>
    <property type="match status" value="2"/>
</dbReference>
<dbReference type="FunFam" id="1.10.8.60:FF:000010">
    <property type="entry name" value="RuvB-like helicase"/>
    <property type="match status" value="1"/>
</dbReference>
<dbReference type="FunFam" id="2.40.50.360:FF:000002">
    <property type="entry name" value="RuvB-like helicase"/>
    <property type="match status" value="1"/>
</dbReference>
<dbReference type="Gene3D" id="1.10.8.60">
    <property type="match status" value="1"/>
</dbReference>
<dbReference type="Gene3D" id="3.40.50.300">
    <property type="entry name" value="P-loop containing nucleotide triphosphate hydrolases"/>
    <property type="match status" value="1"/>
</dbReference>
<dbReference type="Gene3D" id="2.40.50.360">
    <property type="entry name" value="RuvB-like helicase, domain II"/>
    <property type="match status" value="1"/>
</dbReference>
<dbReference type="InterPro" id="IPR003593">
    <property type="entry name" value="AAA+_ATPase"/>
</dbReference>
<dbReference type="InterPro" id="IPR027417">
    <property type="entry name" value="P-loop_NTPase"/>
</dbReference>
<dbReference type="InterPro" id="IPR027238">
    <property type="entry name" value="RuvB-like"/>
</dbReference>
<dbReference type="InterPro" id="IPR041048">
    <property type="entry name" value="RuvB-like_C"/>
</dbReference>
<dbReference type="InterPro" id="IPR042487">
    <property type="entry name" value="RuvBL1/2_DNA/RNA_bd_dom"/>
</dbReference>
<dbReference type="InterPro" id="IPR010339">
    <property type="entry name" value="TIP49_P-loop"/>
</dbReference>
<dbReference type="PANTHER" id="PTHR11093">
    <property type="entry name" value="RUVB-RELATED REPTIN AND PONTIN"/>
    <property type="match status" value="1"/>
</dbReference>
<dbReference type="Pfam" id="PF06068">
    <property type="entry name" value="TIP49"/>
    <property type="match status" value="1"/>
</dbReference>
<dbReference type="Pfam" id="PF17856">
    <property type="entry name" value="TIP49_C"/>
    <property type="match status" value="1"/>
</dbReference>
<dbReference type="SMART" id="SM00382">
    <property type="entry name" value="AAA"/>
    <property type="match status" value="1"/>
</dbReference>
<dbReference type="SUPFAM" id="SSF52540">
    <property type="entry name" value="P-loop containing nucleoside triphosphate hydrolases"/>
    <property type="match status" value="1"/>
</dbReference>
<keyword id="KW-0010">Activator</keyword>
<keyword id="KW-0067">ATP-binding</keyword>
<keyword id="KW-0156">Chromatin regulator</keyword>
<keyword id="KW-0227">DNA damage</keyword>
<keyword id="KW-0234">DNA repair</keyword>
<keyword id="KW-0347">Helicase</keyword>
<keyword id="KW-0378">Hydrolase</keyword>
<keyword id="KW-0547">Nucleotide-binding</keyword>
<keyword id="KW-0539">Nucleus</keyword>
<keyword id="KW-1185">Reference proteome</keyword>
<keyword id="KW-0698">rRNA processing</keyword>
<keyword id="KW-0804">Transcription</keyword>
<keyword id="KW-0805">Transcription regulation</keyword>
<protein>
    <recommendedName>
        <fullName>RuvB-like helicase 2</fullName>
        <ecNumber>3.6.4.12</ecNumber>
    </recommendedName>
</protein>
<feature type="chain" id="PRO_0000165666" description="RuvB-like helicase 2">
    <location>
        <begin position="1"/>
        <end position="463"/>
    </location>
</feature>
<feature type="binding site" evidence="1">
    <location>
        <begin position="76"/>
        <end position="83"/>
    </location>
    <ligand>
        <name>ATP</name>
        <dbReference type="ChEBI" id="CHEBI:30616"/>
    </ligand>
</feature>
<comment type="function">
    <text evidence="1">DNA helicase which participates in several chromatin remodeling complexes, including the SWR1 and the INO80 complexes. The SWR1 complex mediates the ATP-dependent exchange of histone H2A for the H2A variant HZT1 leading to transcriptional regulation of selected genes by chromatin remodeling. The INO80 complex remodels chromatin by shifting nucleosomes and is involved in DNA repair. Also involved in pre-rRNA processing (By similarity).</text>
</comment>
<comment type="catalytic activity">
    <reaction>
        <text>ATP + H2O = ADP + phosphate + H(+)</text>
        <dbReference type="Rhea" id="RHEA:13065"/>
        <dbReference type="ChEBI" id="CHEBI:15377"/>
        <dbReference type="ChEBI" id="CHEBI:15378"/>
        <dbReference type="ChEBI" id="CHEBI:30616"/>
        <dbReference type="ChEBI" id="CHEBI:43474"/>
        <dbReference type="ChEBI" id="CHEBI:456216"/>
        <dbReference type="EC" id="3.6.4.12"/>
    </reaction>
</comment>
<comment type="subunit">
    <text evidence="1">May form heterododecamers with RVB1. Component of the SWR1 chromatin remodeling complex, the INO80 chromatin remodeling complex, and of the R2TP complex (By similarity).</text>
</comment>
<comment type="subcellular location">
    <subcellularLocation>
        <location evidence="1">Nucleus</location>
    </subcellularLocation>
</comment>
<comment type="similarity">
    <text evidence="2">Belongs to the RuvB family.</text>
</comment>
<sequence length="463" mass="50890">MAANISLQPTSMRDVTKMERIGVHSHIHGLGLDSNLEPRASSQGMIGQGKARKAAGVILKMVQEGRIAGRAILMAGPPSTGKTALAMAMTQTLGSDVPFVMLTASEVFSLEISKTESLTQAFRRAIGVRIKEETELIEGEVVEIQVDRSVTGATKTGRLTLKTTDMETVYDLGSKMIDQLQKEKVLAGDVVSIDKASGRISKLGRSFGRAKDYDAMGADTRFVACPDGELQTRKEVVHTVSLHEIDVINSRTQGFLALFAGDTGEIKPELRAQINGKVAEWREEGKAEIVPGVLFIDEVHMLDIECFSFLNRAMENELAPLVVMASNRGITRIRGTKYKSPHGIPADLLDRMLIISTNRYEEDEMREIVKIRAEEEDVRLSPAALDLLATMGIQTSLRYSLNLIAPSSLLAQRRKSPQTDVEDVRMAYKYFCDVERSAQYAKETSGMMFGETEEINGGMEVDA</sequence>
<reference key="1">
    <citation type="journal article" date="2005" name="Science">
        <title>The genome of the basidiomycetous yeast and human pathogen Cryptococcus neoformans.</title>
        <authorList>
            <person name="Loftus B.J."/>
            <person name="Fung E."/>
            <person name="Roncaglia P."/>
            <person name="Rowley D."/>
            <person name="Amedeo P."/>
            <person name="Bruno D."/>
            <person name="Vamathevan J."/>
            <person name="Miranda M."/>
            <person name="Anderson I.J."/>
            <person name="Fraser J.A."/>
            <person name="Allen J.E."/>
            <person name="Bosdet I.E."/>
            <person name="Brent M.R."/>
            <person name="Chiu R."/>
            <person name="Doering T.L."/>
            <person name="Donlin M.J."/>
            <person name="D'Souza C.A."/>
            <person name="Fox D.S."/>
            <person name="Grinberg V."/>
            <person name="Fu J."/>
            <person name="Fukushima M."/>
            <person name="Haas B.J."/>
            <person name="Huang J.C."/>
            <person name="Janbon G."/>
            <person name="Jones S.J.M."/>
            <person name="Koo H.L."/>
            <person name="Krzywinski M.I."/>
            <person name="Kwon-Chung K.J."/>
            <person name="Lengeler K.B."/>
            <person name="Maiti R."/>
            <person name="Marra M.A."/>
            <person name="Marra R.E."/>
            <person name="Mathewson C.A."/>
            <person name="Mitchell T.G."/>
            <person name="Pertea M."/>
            <person name="Riggs F.R."/>
            <person name="Salzberg S.L."/>
            <person name="Schein J.E."/>
            <person name="Shvartsbeyn A."/>
            <person name="Shin H."/>
            <person name="Shumway M."/>
            <person name="Specht C.A."/>
            <person name="Suh B.B."/>
            <person name="Tenney A."/>
            <person name="Utterback T.R."/>
            <person name="Wickes B.L."/>
            <person name="Wortman J.R."/>
            <person name="Wye N.H."/>
            <person name="Kronstad J.W."/>
            <person name="Lodge J.K."/>
            <person name="Heitman J."/>
            <person name="Davis R.W."/>
            <person name="Fraser C.M."/>
            <person name="Hyman R.W."/>
        </authorList>
    </citation>
    <scope>NUCLEOTIDE SEQUENCE [LARGE SCALE GENOMIC DNA]</scope>
    <source>
        <strain>JEC21 / ATCC MYA-565</strain>
    </source>
</reference>
<evidence type="ECO:0000250" key="1"/>
<evidence type="ECO:0000305" key="2"/>
<name>RUVB2_CRYNJ</name>
<gene>
    <name type="primary">RVB2</name>
    <name type="ordered locus">CNA06840</name>
</gene>